<comment type="function">
    <text evidence="1">Molecular scaffold for [Fe-S] cluster assembly of mitochondrial iron-sulfur proteins.</text>
</comment>
<comment type="subcellular location">
    <subcellularLocation>
        <location evidence="2">Mitochondrion</location>
    </subcellularLocation>
</comment>
<comment type="similarity">
    <text evidence="4">Belongs to the NifU family.</text>
</comment>
<protein>
    <recommendedName>
        <fullName evidence="1">NFU1 iron-sulfur cluster scaffold homolog, mitochondrial</fullName>
    </recommendedName>
</protein>
<keyword id="KW-0408">Iron</keyword>
<keyword id="KW-0411">Iron-sulfur</keyword>
<keyword id="KW-0479">Metal-binding</keyword>
<keyword id="KW-0496">Mitochondrion</keyword>
<keyword id="KW-1185">Reference proteome</keyword>
<keyword id="KW-0809">Transit peptide</keyword>
<organism>
    <name type="scientific">Drosophila persimilis</name>
    <name type="common">Fruit fly</name>
    <dbReference type="NCBI Taxonomy" id="7234"/>
    <lineage>
        <taxon>Eukaryota</taxon>
        <taxon>Metazoa</taxon>
        <taxon>Ecdysozoa</taxon>
        <taxon>Arthropoda</taxon>
        <taxon>Hexapoda</taxon>
        <taxon>Insecta</taxon>
        <taxon>Pterygota</taxon>
        <taxon>Neoptera</taxon>
        <taxon>Endopterygota</taxon>
        <taxon>Diptera</taxon>
        <taxon>Brachycera</taxon>
        <taxon>Muscomorpha</taxon>
        <taxon>Ephydroidea</taxon>
        <taxon>Drosophilidae</taxon>
        <taxon>Drosophila</taxon>
        <taxon>Sophophora</taxon>
    </lineage>
</organism>
<sequence length="282" mass="31129">MSKLLSYTARIILRNSRITVRQLVRGFAGFVSGQRNAPQPAYGRPVPGLLRQKMVSSIGKRSMFIQTQDTPNPDSLKFLPGVEVLGKGNTYDFPSGTAAHCSPLAKLLFRVEGVRAVFFGSDFITISKEESAEWSLIKPEVFAVIMDFFASGLPILHEARPNADTEILDDDDETVMMIKELLDTRIRPTVQEDGGDIVFISYENGVVKLKMQGSCSSCPSSIVTLKNGVQNMLQFYIPEVESVEQVFDDADRMADKEFERFEKNLKQKEPAGAPVGIGGGPN</sequence>
<accession>B4H303</accession>
<proteinExistence type="inferred from homology"/>
<name>NFU1_DROPE</name>
<reference evidence="5" key="1">
    <citation type="journal article" date="2007" name="Nature">
        <title>Evolution of genes and genomes on the Drosophila phylogeny.</title>
        <authorList>
            <consortium name="Drosophila 12 genomes consortium"/>
        </authorList>
    </citation>
    <scope>NUCLEOTIDE SEQUENCE [LARGE SCALE GENOMIC DNA]</scope>
    <source>
        <strain>MSH-3 / Tucson 14011-0111.49</strain>
    </source>
</reference>
<evidence type="ECO:0000250" key="1">
    <source>
        <dbReference type="UniProtKB" id="Q9UMS0"/>
    </source>
</evidence>
<evidence type="ECO:0000255" key="2"/>
<evidence type="ECO:0000256" key="3">
    <source>
        <dbReference type="SAM" id="MobiDB-lite"/>
    </source>
</evidence>
<evidence type="ECO:0000305" key="4"/>
<evidence type="ECO:0000312" key="5">
    <source>
        <dbReference type="EMBL" id="EDW30835.1"/>
    </source>
</evidence>
<feature type="transit peptide" description="Mitochondrion" evidence="2">
    <location>
        <begin position="1"/>
        <end position="27"/>
    </location>
</feature>
<feature type="chain" id="PRO_0000388699" description="NFU1 iron-sulfur cluster scaffold homolog, mitochondrial" evidence="2">
    <location>
        <begin position="28"/>
        <end position="282"/>
    </location>
</feature>
<feature type="region of interest" description="NifU" evidence="2">
    <location>
        <begin position="178"/>
        <end position="246"/>
    </location>
</feature>
<feature type="region of interest" description="Disordered" evidence="3">
    <location>
        <begin position="263"/>
        <end position="282"/>
    </location>
</feature>
<feature type="binding site" evidence="1">
    <location>
        <position position="215"/>
    </location>
    <ligand>
        <name>[4Fe-4S] cluster</name>
        <dbReference type="ChEBI" id="CHEBI:49883"/>
        <note>ligand shared between dimeric partners</note>
    </ligand>
</feature>
<feature type="binding site" evidence="1">
    <location>
        <position position="218"/>
    </location>
    <ligand>
        <name>[4Fe-4S] cluster</name>
        <dbReference type="ChEBI" id="CHEBI:49883"/>
        <note>ligand shared between dimeric partners</note>
    </ligand>
</feature>
<gene>
    <name type="ORF">GL13432</name>
</gene>
<dbReference type="EMBL" id="CH479205">
    <property type="protein sequence ID" value="EDW30835.1"/>
    <property type="molecule type" value="Genomic_DNA"/>
</dbReference>
<dbReference type="RefSeq" id="XP_002025336.1">
    <property type="nucleotide sequence ID" value="XM_002025300.1"/>
</dbReference>
<dbReference type="SMR" id="B4H303"/>
<dbReference type="STRING" id="7234.B4H303"/>
<dbReference type="EnsemblMetazoa" id="FBtr0179047">
    <property type="protein sequence ID" value="FBpp0177539"/>
    <property type="gene ID" value="FBgn0151038"/>
</dbReference>
<dbReference type="eggNOG" id="KOG2358">
    <property type="taxonomic scope" value="Eukaryota"/>
</dbReference>
<dbReference type="HOGENOM" id="CLU_060555_0_2_1"/>
<dbReference type="OMA" id="AIMEHYM"/>
<dbReference type="OrthoDB" id="565552at2759"/>
<dbReference type="PhylomeDB" id="B4H303"/>
<dbReference type="Proteomes" id="UP000008744">
    <property type="component" value="Unassembled WGS sequence"/>
</dbReference>
<dbReference type="GO" id="GO:0005739">
    <property type="term" value="C:mitochondrion"/>
    <property type="evidence" value="ECO:0007669"/>
    <property type="project" value="UniProtKB-SubCell"/>
</dbReference>
<dbReference type="GO" id="GO:0005506">
    <property type="term" value="F:iron ion binding"/>
    <property type="evidence" value="ECO:0007669"/>
    <property type="project" value="InterPro"/>
</dbReference>
<dbReference type="GO" id="GO:0051536">
    <property type="term" value="F:iron-sulfur cluster binding"/>
    <property type="evidence" value="ECO:0007669"/>
    <property type="project" value="UniProtKB-KW"/>
</dbReference>
<dbReference type="GO" id="GO:0016226">
    <property type="term" value="P:iron-sulfur cluster assembly"/>
    <property type="evidence" value="ECO:0007669"/>
    <property type="project" value="InterPro"/>
</dbReference>
<dbReference type="FunFam" id="3.30.300.130:FF:000001">
    <property type="entry name" value="NFU1 iron-sulfur cluster scaffold"/>
    <property type="match status" value="1"/>
</dbReference>
<dbReference type="FunFam" id="3.30.1370.70:FF:000002">
    <property type="entry name" value="NFU1 iron-sulfur cluster scaffold homolog, mitochondrial"/>
    <property type="match status" value="1"/>
</dbReference>
<dbReference type="Gene3D" id="3.30.300.130">
    <property type="entry name" value="Fe-S cluster assembly (FSCA)"/>
    <property type="match status" value="1"/>
</dbReference>
<dbReference type="Gene3D" id="3.30.1370.70">
    <property type="entry name" value="Scaffold protein Nfu/NifU, N-terminal domain"/>
    <property type="match status" value="1"/>
</dbReference>
<dbReference type="InterPro" id="IPR034904">
    <property type="entry name" value="FSCA_dom_sf"/>
</dbReference>
<dbReference type="InterPro" id="IPR014824">
    <property type="entry name" value="Nfu/NifU_N"/>
</dbReference>
<dbReference type="InterPro" id="IPR036498">
    <property type="entry name" value="Nfu/NifU_N_sf"/>
</dbReference>
<dbReference type="InterPro" id="IPR001075">
    <property type="entry name" value="NIF_FeS_clus_asmbl_NifU_C"/>
</dbReference>
<dbReference type="PANTHER" id="PTHR11178">
    <property type="entry name" value="IRON-SULFUR CLUSTER SCAFFOLD PROTEIN NFU-RELATED"/>
    <property type="match status" value="1"/>
</dbReference>
<dbReference type="PANTHER" id="PTHR11178:SF1">
    <property type="entry name" value="NFU1 IRON-SULFUR CLUSTER SCAFFOLD HOMOLOG, MITOCHONDRIAL"/>
    <property type="match status" value="1"/>
</dbReference>
<dbReference type="Pfam" id="PF08712">
    <property type="entry name" value="Nfu_N"/>
    <property type="match status" value="1"/>
</dbReference>
<dbReference type="Pfam" id="PF01106">
    <property type="entry name" value="NifU"/>
    <property type="match status" value="1"/>
</dbReference>
<dbReference type="SMART" id="SM00932">
    <property type="entry name" value="Nfu_N"/>
    <property type="match status" value="1"/>
</dbReference>
<dbReference type="SUPFAM" id="SSF117916">
    <property type="entry name" value="Fe-S cluster assembly (FSCA) domain-like"/>
    <property type="match status" value="1"/>
</dbReference>
<dbReference type="SUPFAM" id="SSF110836">
    <property type="entry name" value="Hypothetical protein SAV1430"/>
    <property type="match status" value="1"/>
</dbReference>